<evidence type="ECO:0000255" key="1">
    <source>
        <dbReference type="HAMAP-Rule" id="MF_01185"/>
    </source>
</evidence>
<dbReference type="EMBL" id="CP001358">
    <property type="protein sequence ID" value="ACL49894.1"/>
    <property type="molecule type" value="Genomic_DNA"/>
</dbReference>
<dbReference type="SMR" id="B8J2X5"/>
<dbReference type="STRING" id="525146.Ddes_1998"/>
<dbReference type="KEGG" id="dds:Ddes_1998"/>
<dbReference type="eggNOG" id="COG1699">
    <property type="taxonomic scope" value="Bacteria"/>
</dbReference>
<dbReference type="HOGENOM" id="CLU_112356_0_2_7"/>
<dbReference type="GO" id="GO:0005737">
    <property type="term" value="C:cytoplasm"/>
    <property type="evidence" value="ECO:0007669"/>
    <property type="project" value="UniProtKB-SubCell"/>
</dbReference>
<dbReference type="GO" id="GO:0044780">
    <property type="term" value="P:bacterial-type flagellum assembly"/>
    <property type="evidence" value="ECO:0007669"/>
    <property type="project" value="UniProtKB-UniRule"/>
</dbReference>
<dbReference type="GO" id="GO:0006417">
    <property type="term" value="P:regulation of translation"/>
    <property type="evidence" value="ECO:0007669"/>
    <property type="project" value="UniProtKB-KW"/>
</dbReference>
<dbReference type="Gene3D" id="2.30.290.10">
    <property type="entry name" value="BH3618-like"/>
    <property type="match status" value="1"/>
</dbReference>
<dbReference type="HAMAP" id="MF_01185">
    <property type="entry name" value="FliW"/>
    <property type="match status" value="1"/>
</dbReference>
<dbReference type="InterPro" id="IPR003775">
    <property type="entry name" value="Flagellar_assembly_factor_FliW"/>
</dbReference>
<dbReference type="InterPro" id="IPR024046">
    <property type="entry name" value="Flagellar_assmbl_FliW_dom_sf"/>
</dbReference>
<dbReference type="NCBIfam" id="NF009793">
    <property type="entry name" value="PRK13285.1-1"/>
    <property type="match status" value="1"/>
</dbReference>
<dbReference type="PANTHER" id="PTHR39190">
    <property type="entry name" value="FLAGELLAR ASSEMBLY FACTOR FLIW"/>
    <property type="match status" value="1"/>
</dbReference>
<dbReference type="PANTHER" id="PTHR39190:SF1">
    <property type="entry name" value="FLAGELLAR ASSEMBLY FACTOR FLIW"/>
    <property type="match status" value="1"/>
</dbReference>
<dbReference type="Pfam" id="PF02623">
    <property type="entry name" value="FliW"/>
    <property type="match status" value="1"/>
</dbReference>
<dbReference type="SUPFAM" id="SSF141457">
    <property type="entry name" value="BH3618-like"/>
    <property type="match status" value="1"/>
</dbReference>
<gene>
    <name evidence="1" type="primary">fliW</name>
    <name type="ordered locus">Ddes_1998</name>
</gene>
<comment type="function">
    <text evidence="1">Acts as an anti-CsrA protein, binds CsrA and prevents it from repressing translation of its target genes, one of which is flagellin. Binds to flagellin and participates in the assembly of the flagellum.</text>
</comment>
<comment type="subunit">
    <text evidence="1">Interacts with translational regulator CsrA and flagellin(s).</text>
</comment>
<comment type="subcellular location">
    <subcellularLocation>
        <location evidence="1">Cytoplasm</location>
    </subcellularLocation>
</comment>
<comment type="similarity">
    <text evidence="1">Belongs to the FliW family.</text>
</comment>
<protein>
    <recommendedName>
        <fullName evidence="1">Flagellar assembly factor FliW</fullName>
    </recommendedName>
</protein>
<reference key="1">
    <citation type="submission" date="2009-01" db="EMBL/GenBank/DDBJ databases">
        <title>Complete sequence of Desulfovibrio desulfuricans subsp. desulfuricans str. ATCC 27774.</title>
        <authorList>
            <consortium name="US DOE Joint Genome Institute"/>
            <person name="Lucas S."/>
            <person name="Copeland A."/>
            <person name="Lapidus A."/>
            <person name="Glavina del Rio T."/>
            <person name="Tice H."/>
            <person name="Bruce D."/>
            <person name="Goodwin L."/>
            <person name="Pitluck S."/>
            <person name="Sims D."/>
            <person name="Lu M."/>
            <person name="Kiss H."/>
            <person name="Meineke L."/>
            <person name="Brettin T."/>
            <person name="Detter J.C."/>
            <person name="Han C."/>
            <person name="Larimer F."/>
            <person name="Land M."/>
            <person name="Hauser L."/>
            <person name="Kyrpides N."/>
            <person name="Ovchinnikova G."/>
            <person name="Hazen T.C."/>
        </authorList>
    </citation>
    <scope>NUCLEOTIDE SEQUENCE [LARGE SCALE GENOMIC DNA]</scope>
    <source>
        <strain>ATCC 27774 / DSM 6949 / MB</strain>
    </source>
</reference>
<accession>B8J2X5</accession>
<feature type="chain" id="PRO_1000164467" description="Flagellar assembly factor FliW">
    <location>
        <begin position="1"/>
        <end position="166"/>
    </location>
</feature>
<keyword id="KW-1005">Bacterial flagellum biogenesis</keyword>
<keyword id="KW-0143">Chaperone</keyword>
<keyword id="KW-0963">Cytoplasm</keyword>
<keyword id="KW-0810">Translation regulation</keyword>
<proteinExistence type="inferred from homology"/>
<sequence>MARNKEIEIDTRLGRRSVDADKVVHFPRGLAGFENERDFILLQIRPEAPLLILQSMSNPVVGLLVADPYSFMEKSAYAPAMGEAEKQLLRISDLDEAAVLVTVTIPAGQPGEAALNLAGPIVINSRERVGLQVPQCSDGPQQIYMHSLKPVGESGQAEKSEAAPAE</sequence>
<name>FLIW_DESDA</name>
<organism>
    <name type="scientific">Desulfovibrio desulfuricans (strain ATCC 27774 / DSM 6949 / MB)</name>
    <dbReference type="NCBI Taxonomy" id="525146"/>
    <lineage>
        <taxon>Bacteria</taxon>
        <taxon>Pseudomonadati</taxon>
        <taxon>Thermodesulfobacteriota</taxon>
        <taxon>Desulfovibrionia</taxon>
        <taxon>Desulfovibrionales</taxon>
        <taxon>Desulfovibrionaceae</taxon>
        <taxon>Desulfovibrio</taxon>
    </lineage>
</organism>